<evidence type="ECO:0000255" key="1">
    <source>
        <dbReference type="HAMAP-Rule" id="MF_01367"/>
    </source>
</evidence>
<evidence type="ECO:0000305" key="2"/>
<name>RL14_THISH</name>
<proteinExistence type="inferred from homology"/>
<reference key="1">
    <citation type="journal article" date="2011" name="Stand. Genomic Sci.">
        <title>Complete genome sequence of 'Thioalkalivibrio sulfidophilus' HL-EbGr7.</title>
        <authorList>
            <person name="Muyzer G."/>
            <person name="Sorokin D.Y."/>
            <person name="Mavromatis K."/>
            <person name="Lapidus A."/>
            <person name="Clum A."/>
            <person name="Ivanova N."/>
            <person name="Pati A."/>
            <person name="d'Haeseleer P."/>
            <person name="Woyke T."/>
            <person name="Kyrpides N.C."/>
        </authorList>
    </citation>
    <scope>NUCLEOTIDE SEQUENCE [LARGE SCALE GENOMIC DNA]</scope>
    <source>
        <strain>HL-EbGR7</strain>
    </source>
</reference>
<feature type="chain" id="PRO_1000166947" description="Large ribosomal subunit protein uL14">
    <location>
        <begin position="1"/>
        <end position="122"/>
    </location>
</feature>
<dbReference type="EMBL" id="CP001339">
    <property type="protein sequence ID" value="ACL73394.1"/>
    <property type="molecule type" value="Genomic_DNA"/>
</dbReference>
<dbReference type="RefSeq" id="WP_012638870.1">
    <property type="nucleotide sequence ID" value="NC_011901.1"/>
</dbReference>
<dbReference type="SMR" id="B8GV48"/>
<dbReference type="STRING" id="396588.Tgr7_2314"/>
<dbReference type="KEGG" id="tgr:Tgr7_2314"/>
<dbReference type="eggNOG" id="COG0093">
    <property type="taxonomic scope" value="Bacteria"/>
</dbReference>
<dbReference type="HOGENOM" id="CLU_095071_2_1_6"/>
<dbReference type="OrthoDB" id="9806379at2"/>
<dbReference type="Proteomes" id="UP000002383">
    <property type="component" value="Chromosome"/>
</dbReference>
<dbReference type="GO" id="GO:0022625">
    <property type="term" value="C:cytosolic large ribosomal subunit"/>
    <property type="evidence" value="ECO:0007669"/>
    <property type="project" value="TreeGrafter"/>
</dbReference>
<dbReference type="GO" id="GO:0070180">
    <property type="term" value="F:large ribosomal subunit rRNA binding"/>
    <property type="evidence" value="ECO:0007669"/>
    <property type="project" value="TreeGrafter"/>
</dbReference>
<dbReference type="GO" id="GO:0003735">
    <property type="term" value="F:structural constituent of ribosome"/>
    <property type="evidence" value="ECO:0007669"/>
    <property type="project" value="InterPro"/>
</dbReference>
<dbReference type="GO" id="GO:0006412">
    <property type="term" value="P:translation"/>
    <property type="evidence" value="ECO:0007669"/>
    <property type="project" value="UniProtKB-UniRule"/>
</dbReference>
<dbReference type="CDD" id="cd00337">
    <property type="entry name" value="Ribosomal_uL14"/>
    <property type="match status" value="1"/>
</dbReference>
<dbReference type="FunFam" id="2.40.150.20:FF:000001">
    <property type="entry name" value="50S ribosomal protein L14"/>
    <property type="match status" value="1"/>
</dbReference>
<dbReference type="Gene3D" id="2.40.150.20">
    <property type="entry name" value="Ribosomal protein L14"/>
    <property type="match status" value="1"/>
</dbReference>
<dbReference type="HAMAP" id="MF_01367">
    <property type="entry name" value="Ribosomal_uL14"/>
    <property type="match status" value="1"/>
</dbReference>
<dbReference type="InterPro" id="IPR000218">
    <property type="entry name" value="Ribosomal_uL14"/>
</dbReference>
<dbReference type="InterPro" id="IPR005745">
    <property type="entry name" value="Ribosomal_uL14_bac-type"/>
</dbReference>
<dbReference type="InterPro" id="IPR019972">
    <property type="entry name" value="Ribosomal_uL14_CS"/>
</dbReference>
<dbReference type="InterPro" id="IPR036853">
    <property type="entry name" value="Ribosomal_uL14_sf"/>
</dbReference>
<dbReference type="NCBIfam" id="TIGR01067">
    <property type="entry name" value="rplN_bact"/>
    <property type="match status" value="1"/>
</dbReference>
<dbReference type="PANTHER" id="PTHR11761">
    <property type="entry name" value="50S/60S RIBOSOMAL PROTEIN L14/L23"/>
    <property type="match status" value="1"/>
</dbReference>
<dbReference type="PANTHER" id="PTHR11761:SF3">
    <property type="entry name" value="LARGE RIBOSOMAL SUBUNIT PROTEIN UL14M"/>
    <property type="match status" value="1"/>
</dbReference>
<dbReference type="Pfam" id="PF00238">
    <property type="entry name" value="Ribosomal_L14"/>
    <property type="match status" value="1"/>
</dbReference>
<dbReference type="SMART" id="SM01374">
    <property type="entry name" value="Ribosomal_L14"/>
    <property type="match status" value="1"/>
</dbReference>
<dbReference type="SUPFAM" id="SSF50193">
    <property type="entry name" value="Ribosomal protein L14"/>
    <property type="match status" value="1"/>
</dbReference>
<dbReference type="PROSITE" id="PS00049">
    <property type="entry name" value="RIBOSOMAL_L14"/>
    <property type="match status" value="1"/>
</dbReference>
<organism>
    <name type="scientific">Thioalkalivibrio sulfidiphilus (strain HL-EbGR7)</name>
    <dbReference type="NCBI Taxonomy" id="396588"/>
    <lineage>
        <taxon>Bacteria</taxon>
        <taxon>Pseudomonadati</taxon>
        <taxon>Pseudomonadota</taxon>
        <taxon>Gammaproteobacteria</taxon>
        <taxon>Chromatiales</taxon>
        <taxon>Ectothiorhodospiraceae</taxon>
        <taxon>Thioalkalivibrio</taxon>
    </lineage>
</organism>
<protein>
    <recommendedName>
        <fullName evidence="1">Large ribosomal subunit protein uL14</fullName>
    </recommendedName>
    <alternativeName>
        <fullName evidence="2">50S ribosomal protein L14</fullName>
    </alternativeName>
</protein>
<sequence length="122" mass="13354">MIQMQTVLDAADNSGARKVQCIKVLGGSHRRYASVGDIIKVSVKDAIPRGKVKKGEVYNAVVVRTAKGVRRPDGSVVRFDRNAAVLLNNQLQPIGTRIFGPVTRELRGEKFMKIISLAPEVL</sequence>
<comment type="function">
    <text evidence="1">Binds to 23S rRNA. Forms part of two intersubunit bridges in the 70S ribosome.</text>
</comment>
<comment type="subunit">
    <text evidence="1">Part of the 50S ribosomal subunit. Forms a cluster with proteins L3 and L19. In the 70S ribosome, L14 and L19 interact and together make contacts with the 16S rRNA in bridges B5 and B8.</text>
</comment>
<comment type="similarity">
    <text evidence="1">Belongs to the universal ribosomal protein uL14 family.</text>
</comment>
<gene>
    <name evidence="1" type="primary">rplN</name>
    <name type="ordered locus">Tgr7_2314</name>
</gene>
<accession>B8GV48</accession>
<keyword id="KW-1185">Reference proteome</keyword>
<keyword id="KW-0687">Ribonucleoprotein</keyword>
<keyword id="KW-0689">Ribosomal protein</keyword>
<keyword id="KW-0694">RNA-binding</keyword>
<keyword id="KW-0699">rRNA-binding</keyword>